<keyword id="KW-0963">Cytoplasm</keyword>
<keyword id="KW-0269">Exonuclease</keyword>
<keyword id="KW-0378">Hydrolase</keyword>
<keyword id="KW-0540">Nuclease</keyword>
<name>EX7L_ECOBW</name>
<comment type="function">
    <text evidence="1">Bidirectionally degrades single-stranded DNA into large acid-insoluble oligonucleotides, which are then degraded further into small acid-soluble oligonucleotides.</text>
</comment>
<comment type="catalytic activity">
    <reaction evidence="1">
        <text>Exonucleolytic cleavage in either 5'- to 3'- or 3'- to 5'-direction to yield nucleoside 5'-phosphates.</text>
        <dbReference type="EC" id="3.1.11.6"/>
    </reaction>
</comment>
<comment type="subunit">
    <text evidence="1">Heterooligomer composed of large and small subunits.</text>
</comment>
<comment type="subcellular location">
    <subcellularLocation>
        <location evidence="1">Cytoplasm</location>
    </subcellularLocation>
</comment>
<comment type="similarity">
    <text evidence="1">Belongs to the XseA family.</text>
</comment>
<proteinExistence type="inferred from homology"/>
<dbReference type="EC" id="3.1.11.6" evidence="1"/>
<dbReference type="EMBL" id="CP001396">
    <property type="protein sequence ID" value="ACR63054.1"/>
    <property type="molecule type" value="Genomic_DNA"/>
</dbReference>
<dbReference type="RefSeq" id="WP_000937912.1">
    <property type="nucleotide sequence ID" value="NC_012759.1"/>
</dbReference>
<dbReference type="SMR" id="C4ZX84"/>
<dbReference type="KEGG" id="ebw:BWG_2273"/>
<dbReference type="HOGENOM" id="CLU_023625_3_1_6"/>
<dbReference type="GO" id="GO:0005737">
    <property type="term" value="C:cytoplasm"/>
    <property type="evidence" value="ECO:0007669"/>
    <property type="project" value="UniProtKB-SubCell"/>
</dbReference>
<dbReference type="GO" id="GO:0009318">
    <property type="term" value="C:exodeoxyribonuclease VII complex"/>
    <property type="evidence" value="ECO:0007669"/>
    <property type="project" value="InterPro"/>
</dbReference>
<dbReference type="GO" id="GO:0008855">
    <property type="term" value="F:exodeoxyribonuclease VII activity"/>
    <property type="evidence" value="ECO:0007669"/>
    <property type="project" value="UniProtKB-UniRule"/>
</dbReference>
<dbReference type="GO" id="GO:0003676">
    <property type="term" value="F:nucleic acid binding"/>
    <property type="evidence" value="ECO:0007669"/>
    <property type="project" value="InterPro"/>
</dbReference>
<dbReference type="GO" id="GO:0006308">
    <property type="term" value="P:DNA catabolic process"/>
    <property type="evidence" value="ECO:0007669"/>
    <property type="project" value="UniProtKB-UniRule"/>
</dbReference>
<dbReference type="CDD" id="cd04489">
    <property type="entry name" value="ExoVII_LU_OBF"/>
    <property type="match status" value="1"/>
</dbReference>
<dbReference type="HAMAP" id="MF_00378">
    <property type="entry name" value="Exonuc_7_L"/>
    <property type="match status" value="1"/>
</dbReference>
<dbReference type="InterPro" id="IPR003753">
    <property type="entry name" value="Exonuc_VII_L"/>
</dbReference>
<dbReference type="InterPro" id="IPR020579">
    <property type="entry name" value="Exonuc_VII_lsu_C"/>
</dbReference>
<dbReference type="InterPro" id="IPR025824">
    <property type="entry name" value="OB-fold_nuc-bd_dom"/>
</dbReference>
<dbReference type="NCBIfam" id="TIGR00237">
    <property type="entry name" value="xseA"/>
    <property type="match status" value="1"/>
</dbReference>
<dbReference type="PANTHER" id="PTHR30008">
    <property type="entry name" value="EXODEOXYRIBONUCLEASE 7 LARGE SUBUNIT"/>
    <property type="match status" value="1"/>
</dbReference>
<dbReference type="PANTHER" id="PTHR30008:SF0">
    <property type="entry name" value="EXODEOXYRIBONUCLEASE 7 LARGE SUBUNIT"/>
    <property type="match status" value="1"/>
</dbReference>
<dbReference type="Pfam" id="PF02601">
    <property type="entry name" value="Exonuc_VII_L"/>
    <property type="match status" value="1"/>
</dbReference>
<dbReference type="Pfam" id="PF13742">
    <property type="entry name" value="tRNA_anti_2"/>
    <property type="match status" value="1"/>
</dbReference>
<accession>C4ZX84</accession>
<reference key="1">
    <citation type="journal article" date="2009" name="J. Bacteriol.">
        <title>Genomic sequencing reveals regulatory mutations and recombinational events in the widely used MC4100 lineage of Escherichia coli K-12.</title>
        <authorList>
            <person name="Ferenci T."/>
            <person name="Zhou Z."/>
            <person name="Betteridge T."/>
            <person name="Ren Y."/>
            <person name="Liu Y."/>
            <person name="Feng L."/>
            <person name="Reeves P.R."/>
            <person name="Wang L."/>
        </authorList>
    </citation>
    <scope>NUCLEOTIDE SEQUENCE [LARGE SCALE GENOMIC DNA]</scope>
    <source>
        <strain>K12 / MC4100 / BW2952</strain>
    </source>
</reference>
<evidence type="ECO:0000255" key="1">
    <source>
        <dbReference type="HAMAP-Rule" id="MF_00378"/>
    </source>
</evidence>
<gene>
    <name evidence="1" type="primary">xseA</name>
    <name type="ordered locus">BWG_2273</name>
</gene>
<feature type="chain" id="PRO_1000205671" description="Exodeoxyribonuclease 7 large subunit">
    <location>
        <begin position="1"/>
        <end position="456"/>
    </location>
</feature>
<organism>
    <name type="scientific">Escherichia coli (strain K12 / MC4100 / BW2952)</name>
    <dbReference type="NCBI Taxonomy" id="595496"/>
    <lineage>
        <taxon>Bacteria</taxon>
        <taxon>Pseudomonadati</taxon>
        <taxon>Pseudomonadota</taxon>
        <taxon>Gammaproteobacteria</taxon>
        <taxon>Enterobacterales</taxon>
        <taxon>Enterobacteriaceae</taxon>
        <taxon>Escherichia</taxon>
    </lineage>
</organism>
<sequence length="456" mass="51832">MLPSQSPAIFTVSRLNQTVRLLLEHEMGQVWISGEISNFTQPASGHWYFTLKDDTAQVRCAMFRNSNRRVTFRPQHGQQVLVRANITLYEPRGDYQIIVESMQPAGEGLLQQKYEQLKAKLQAEGLFDQQYKKPLPSPAHCVGVITSKTGAALHDILHVLKRRDPSLPVIIYPAAVQGDDAPGQIVRAIELANQRNECDVLIVGRGGGSLEDLWSFNDERVARAIFTSRIPVVSAVGHETDVTIADFVADLRAPTPSAAAEVVSRNQQELLRQVQSTRQRLEMAMDYYLANRTRRFTQIHHRLQQQHPQLRLARQQTMLERLQKRMSFALENQLKRTGQQQQRLTQRLNQQNPQPKIHRAQTRIQQLEYRLAETLRAQLSATRERFGNAVTHLEAVSPLSTLARGYSVTTATDGNVLKKVKQVKAGEMLTTRLEDGWIESEVKNIQPVKKSRKKVH</sequence>
<protein>
    <recommendedName>
        <fullName evidence="1">Exodeoxyribonuclease 7 large subunit</fullName>
        <ecNumber evidence="1">3.1.11.6</ecNumber>
    </recommendedName>
    <alternativeName>
        <fullName evidence="1">Exodeoxyribonuclease VII large subunit</fullName>
        <shortName evidence="1">Exonuclease VII large subunit</shortName>
    </alternativeName>
</protein>